<organism>
    <name type="scientific">Azotobacter vinelandii (strain DJ / ATCC BAA-1303)</name>
    <dbReference type="NCBI Taxonomy" id="322710"/>
    <lineage>
        <taxon>Bacteria</taxon>
        <taxon>Pseudomonadati</taxon>
        <taxon>Pseudomonadota</taxon>
        <taxon>Gammaproteobacteria</taxon>
        <taxon>Pseudomonadales</taxon>
        <taxon>Pseudomonadaceae</taxon>
        <taxon>Azotobacter</taxon>
    </lineage>
</organism>
<proteinExistence type="inferred from homology"/>
<evidence type="ECO:0000255" key="1">
    <source>
        <dbReference type="HAMAP-Rule" id="MF_00121"/>
    </source>
</evidence>
<comment type="function">
    <text evidence="1">Allows the formation of correctly charged Asn-tRNA(Asn) or Gln-tRNA(Gln) through the transamidation of misacylated Asp-tRNA(Asn) or Glu-tRNA(Gln) in organisms which lack either or both of asparaginyl-tRNA or glutaminyl-tRNA synthetases. The reaction takes place in the presence of glutamine and ATP through an activated phospho-Asp-tRNA(Asn) or phospho-Glu-tRNA(Gln).</text>
</comment>
<comment type="catalytic activity">
    <reaction evidence="1">
        <text>L-glutamyl-tRNA(Gln) + L-glutamine + ATP + H2O = L-glutaminyl-tRNA(Gln) + L-glutamate + ADP + phosphate + H(+)</text>
        <dbReference type="Rhea" id="RHEA:17521"/>
        <dbReference type="Rhea" id="RHEA-COMP:9681"/>
        <dbReference type="Rhea" id="RHEA-COMP:9684"/>
        <dbReference type="ChEBI" id="CHEBI:15377"/>
        <dbReference type="ChEBI" id="CHEBI:15378"/>
        <dbReference type="ChEBI" id="CHEBI:29985"/>
        <dbReference type="ChEBI" id="CHEBI:30616"/>
        <dbReference type="ChEBI" id="CHEBI:43474"/>
        <dbReference type="ChEBI" id="CHEBI:58359"/>
        <dbReference type="ChEBI" id="CHEBI:78520"/>
        <dbReference type="ChEBI" id="CHEBI:78521"/>
        <dbReference type="ChEBI" id="CHEBI:456216"/>
    </reaction>
</comment>
<comment type="catalytic activity">
    <reaction evidence="1">
        <text>L-aspartyl-tRNA(Asn) + L-glutamine + ATP + H2O = L-asparaginyl-tRNA(Asn) + L-glutamate + ADP + phosphate + 2 H(+)</text>
        <dbReference type="Rhea" id="RHEA:14513"/>
        <dbReference type="Rhea" id="RHEA-COMP:9674"/>
        <dbReference type="Rhea" id="RHEA-COMP:9677"/>
        <dbReference type="ChEBI" id="CHEBI:15377"/>
        <dbReference type="ChEBI" id="CHEBI:15378"/>
        <dbReference type="ChEBI" id="CHEBI:29985"/>
        <dbReference type="ChEBI" id="CHEBI:30616"/>
        <dbReference type="ChEBI" id="CHEBI:43474"/>
        <dbReference type="ChEBI" id="CHEBI:58359"/>
        <dbReference type="ChEBI" id="CHEBI:78515"/>
        <dbReference type="ChEBI" id="CHEBI:78516"/>
        <dbReference type="ChEBI" id="CHEBI:456216"/>
    </reaction>
</comment>
<comment type="subunit">
    <text evidence="1">Heterotrimer of A, B and C subunits.</text>
</comment>
<comment type="similarity">
    <text evidence="1">Belongs to the GatB/GatE family. GatB subfamily.</text>
</comment>
<name>GATB_AZOVD</name>
<accession>C1DQ36</accession>
<gene>
    <name evidence="1" type="primary">gatB</name>
    <name type="ordered locus">Avin_12610</name>
</gene>
<dbReference type="EC" id="6.3.5.-" evidence="1"/>
<dbReference type="EMBL" id="CP001157">
    <property type="protein sequence ID" value="ACO77488.1"/>
    <property type="molecule type" value="Genomic_DNA"/>
</dbReference>
<dbReference type="RefSeq" id="WP_012699908.1">
    <property type="nucleotide sequence ID" value="NC_012560.1"/>
</dbReference>
<dbReference type="SMR" id="C1DQ36"/>
<dbReference type="STRING" id="322710.Avin_12610"/>
<dbReference type="EnsemblBacteria" id="ACO77488">
    <property type="protein sequence ID" value="ACO77488"/>
    <property type="gene ID" value="Avin_12610"/>
</dbReference>
<dbReference type="GeneID" id="88184578"/>
<dbReference type="KEGG" id="avn:Avin_12610"/>
<dbReference type="eggNOG" id="COG0064">
    <property type="taxonomic scope" value="Bacteria"/>
</dbReference>
<dbReference type="HOGENOM" id="CLU_019240_0_0_6"/>
<dbReference type="OrthoDB" id="9804078at2"/>
<dbReference type="Proteomes" id="UP000002424">
    <property type="component" value="Chromosome"/>
</dbReference>
<dbReference type="GO" id="GO:0050566">
    <property type="term" value="F:asparaginyl-tRNA synthase (glutamine-hydrolyzing) activity"/>
    <property type="evidence" value="ECO:0007669"/>
    <property type="project" value="RHEA"/>
</dbReference>
<dbReference type="GO" id="GO:0005524">
    <property type="term" value="F:ATP binding"/>
    <property type="evidence" value="ECO:0007669"/>
    <property type="project" value="UniProtKB-KW"/>
</dbReference>
<dbReference type="GO" id="GO:0050567">
    <property type="term" value="F:glutaminyl-tRNA synthase (glutamine-hydrolyzing) activity"/>
    <property type="evidence" value="ECO:0007669"/>
    <property type="project" value="UniProtKB-UniRule"/>
</dbReference>
<dbReference type="GO" id="GO:0070681">
    <property type="term" value="P:glutaminyl-tRNAGln biosynthesis via transamidation"/>
    <property type="evidence" value="ECO:0007669"/>
    <property type="project" value="TreeGrafter"/>
</dbReference>
<dbReference type="GO" id="GO:0006412">
    <property type="term" value="P:translation"/>
    <property type="evidence" value="ECO:0007669"/>
    <property type="project" value="UniProtKB-UniRule"/>
</dbReference>
<dbReference type="FunFam" id="1.10.10.410:FF:000001">
    <property type="entry name" value="Aspartyl/glutamyl-tRNA(Asn/Gln) amidotransferase subunit B"/>
    <property type="match status" value="1"/>
</dbReference>
<dbReference type="FunFam" id="1.10.150.380:FF:000001">
    <property type="entry name" value="Aspartyl/glutamyl-tRNA(Asn/Gln) amidotransferase subunit B"/>
    <property type="match status" value="1"/>
</dbReference>
<dbReference type="Gene3D" id="1.10.10.410">
    <property type="match status" value="1"/>
</dbReference>
<dbReference type="Gene3D" id="1.10.150.380">
    <property type="entry name" value="GatB domain, N-terminal subdomain"/>
    <property type="match status" value="1"/>
</dbReference>
<dbReference type="HAMAP" id="MF_00121">
    <property type="entry name" value="GatB"/>
    <property type="match status" value="1"/>
</dbReference>
<dbReference type="InterPro" id="IPR017959">
    <property type="entry name" value="Asn/Gln-tRNA_amidoTrfase_suB/E"/>
</dbReference>
<dbReference type="InterPro" id="IPR006075">
    <property type="entry name" value="Asn/Gln-tRNA_Trfase_suB/E_cat"/>
</dbReference>
<dbReference type="InterPro" id="IPR018027">
    <property type="entry name" value="Asn/Gln_amidotransferase"/>
</dbReference>
<dbReference type="InterPro" id="IPR003789">
    <property type="entry name" value="Asn/Gln_tRNA_amidoTrase-B-like"/>
</dbReference>
<dbReference type="InterPro" id="IPR004413">
    <property type="entry name" value="GatB"/>
</dbReference>
<dbReference type="InterPro" id="IPR042114">
    <property type="entry name" value="GatB_C_1"/>
</dbReference>
<dbReference type="InterPro" id="IPR023168">
    <property type="entry name" value="GatB_Yqey_C_2"/>
</dbReference>
<dbReference type="InterPro" id="IPR017958">
    <property type="entry name" value="Gln-tRNA_amidoTrfase_suB_CS"/>
</dbReference>
<dbReference type="InterPro" id="IPR014746">
    <property type="entry name" value="Gln_synth/guanido_kin_cat_dom"/>
</dbReference>
<dbReference type="NCBIfam" id="TIGR00133">
    <property type="entry name" value="gatB"/>
    <property type="match status" value="1"/>
</dbReference>
<dbReference type="NCBIfam" id="NF004012">
    <property type="entry name" value="PRK05477.1-2"/>
    <property type="match status" value="1"/>
</dbReference>
<dbReference type="NCBIfam" id="NF004014">
    <property type="entry name" value="PRK05477.1-4"/>
    <property type="match status" value="1"/>
</dbReference>
<dbReference type="NCBIfam" id="NF004015">
    <property type="entry name" value="PRK05477.1-5"/>
    <property type="match status" value="1"/>
</dbReference>
<dbReference type="PANTHER" id="PTHR11659">
    <property type="entry name" value="GLUTAMYL-TRNA GLN AMIDOTRANSFERASE SUBUNIT B MITOCHONDRIAL AND PROKARYOTIC PET112-RELATED"/>
    <property type="match status" value="1"/>
</dbReference>
<dbReference type="PANTHER" id="PTHR11659:SF0">
    <property type="entry name" value="GLUTAMYL-TRNA(GLN) AMIDOTRANSFERASE SUBUNIT B, MITOCHONDRIAL"/>
    <property type="match status" value="1"/>
</dbReference>
<dbReference type="Pfam" id="PF02934">
    <property type="entry name" value="GatB_N"/>
    <property type="match status" value="1"/>
</dbReference>
<dbReference type="Pfam" id="PF02637">
    <property type="entry name" value="GatB_Yqey"/>
    <property type="match status" value="1"/>
</dbReference>
<dbReference type="SMART" id="SM00845">
    <property type="entry name" value="GatB_Yqey"/>
    <property type="match status" value="1"/>
</dbReference>
<dbReference type="SUPFAM" id="SSF89095">
    <property type="entry name" value="GatB/YqeY motif"/>
    <property type="match status" value="1"/>
</dbReference>
<dbReference type="SUPFAM" id="SSF55931">
    <property type="entry name" value="Glutamine synthetase/guanido kinase"/>
    <property type="match status" value="1"/>
</dbReference>
<dbReference type="PROSITE" id="PS01234">
    <property type="entry name" value="GATB"/>
    <property type="match status" value="1"/>
</dbReference>
<feature type="chain" id="PRO_1000203048" description="Aspartyl/glutamyl-tRNA(Asn/Gln) amidotransferase subunit B">
    <location>
        <begin position="1"/>
        <end position="482"/>
    </location>
</feature>
<keyword id="KW-0067">ATP-binding</keyword>
<keyword id="KW-0436">Ligase</keyword>
<keyword id="KW-0547">Nucleotide-binding</keyword>
<keyword id="KW-0648">Protein biosynthesis</keyword>
<protein>
    <recommendedName>
        <fullName evidence="1">Aspartyl/glutamyl-tRNA(Asn/Gln) amidotransferase subunit B</fullName>
        <shortName evidence="1">Asp/Glu-ADT subunit B</shortName>
        <ecNumber evidence="1">6.3.5.-</ecNumber>
    </recommendedName>
</protein>
<reference key="1">
    <citation type="journal article" date="2009" name="J. Bacteriol.">
        <title>Genome sequence of Azotobacter vinelandii, an obligate aerobe specialized to support diverse anaerobic metabolic processes.</title>
        <authorList>
            <person name="Setubal J.C."/>
            <person name="Dos Santos P."/>
            <person name="Goldman B.S."/>
            <person name="Ertesvaag H."/>
            <person name="Espin G."/>
            <person name="Rubio L.M."/>
            <person name="Valla S."/>
            <person name="Almeida N.F."/>
            <person name="Balasubramanian D."/>
            <person name="Cromes L."/>
            <person name="Curatti L."/>
            <person name="Du Z."/>
            <person name="Godsy E."/>
            <person name="Goodner B."/>
            <person name="Hellner-Burris K."/>
            <person name="Hernandez J.A."/>
            <person name="Houmiel K."/>
            <person name="Imperial J."/>
            <person name="Kennedy C."/>
            <person name="Larson T.J."/>
            <person name="Latreille P."/>
            <person name="Ligon L.S."/>
            <person name="Lu J."/>
            <person name="Maerk M."/>
            <person name="Miller N.M."/>
            <person name="Norton S."/>
            <person name="O'Carroll I.P."/>
            <person name="Paulsen I."/>
            <person name="Raulfs E.C."/>
            <person name="Roemer R."/>
            <person name="Rosser J."/>
            <person name="Segura D."/>
            <person name="Slater S."/>
            <person name="Stricklin S.L."/>
            <person name="Studholme D.J."/>
            <person name="Sun J."/>
            <person name="Viana C.J."/>
            <person name="Wallin E."/>
            <person name="Wang B."/>
            <person name="Wheeler C."/>
            <person name="Zhu H."/>
            <person name="Dean D.R."/>
            <person name="Dixon R."/>
            <person name="Wood D."/>
        </authorList>
    </citation>
    <scope>NUCLEOTIDE SEQUENCE [LARGE SCALE GENOMIC DNA]</scope>
    <source>
        <strain>DJ / ATCC BAA-1303</strain>
    </source>
</reference>
<sequence length="482" mass="53221">MQWETVIGLEIHAQLATRSKIFSGSATAFGAEPNTQASLIDLGMPGTLPVLNEETVRMAVRFGLAIEAEIGHTNVFARKNYFYPDLPKGYQTSQMDKPIVGKGHLDITLEDGTLKRIGITRAHLEEDAGKSLHEDFHGMTGIDLNRAGTPLLEIVSEPDIRSAKEAVAYVKAIHALVRYLGICDGNMAEGSLRCDCNVSVRPRGQEAFGTRAEIKNVNSFRFIEKAINHEIQRQIELIEDGGKVIQETRLYDPNKDETRSMRGKEEANDYRYFPCPDLLPVVLEDGFVERLRETLPELPNQKRERFQSQYGLSAYDASVLSASREMAEYFEAVFEVCGDAKLAANWVMGELSSLLNKEGLEIERSPVSAEQLGGLIRRIQDNTISGKIAKMVFEALAADEGASADAIIERKGLKQVTDTGAIESMLDEMLAANAAQVEQYRAADEAKRAKMFGFFVGQAMKASKGKANPGQVNELLKKKLEG</sequence>